<feature type="chain" id="PRO_1000134949" description="Putative pterin-4-alpha-carbinolamine dehydratase">
    <location>
        <begin position="1"/>
        <end position="93"/>
    </location>
</feature>
<protein>
    <recommendedName>
        <fullName evidence="1">Putative pterin-4-alpha-carbinolamine dehydratase</fullName>
        <shortName evidence="1">PHS</shortName>
        <ecNumber evidence="1">4.2.1.96</ecNumber>
    </recommendedName>
    <alternativeName>
        <fullName evidence="1">4-alpha-hydroxy-tetrahydropterin dehydratase</fullName>
    </alternativeName>
    <alternativeName>
        <fullName evidence="1">Pterin carbinolamine dehydratase</fullName>
        <shortName evidence="1">PCD</shortName>
    </alternativeName>
</protein>
<accession>B9LCC8</accession>
<comment type="catalytic activity">
    <reaction evidence="1">
        <text>(4aS,6R)-4a-hydroxy-L-erythro-5,6,7,8-tetrahydrobiopterin = (6R)-L-erythro-6,7-dihydrobiopterin + H2O</text>
        <dbReference type="Rhea" id="RHEA:11920"/>
        <dbReference type="ChEBI" id="CHEBI:15377"/>
        <dbReference type="ChEBI" id="CHEBI:15642"/>
        <dbReference type="ChEBI" id="CHEBI:43120"/>
        <dbReference type="EC" id="4.2.1.96"/>
    </reaction>
</comment>
<comment type="similarity">
    <text evidence="1">Belongs to the pterin-4-alpha-carbinolamine dehydratase family.</text>
</comment>
<evidence type="ECO:0000255" key="1">
    <source>
        <dbReference type="HAMAP-Rule" id="MF_00434"/>
    </source>
</evidence>
<name>PHS_CHLSY</name>
<reference key="1">
    <citation type="submission" date="2009-01" db="EMBL/GenBank/DDBJ databases">
        <title>Complete sequence of Chloroflexus sp. Y-400-fl.</title>
        <authorList>
            <consortium name="US DOE Joint Genome Institute"/>
            <person name="Lucas S."/>
            <person name="Copeland A."/>
            <person name="Lapidus A."/>
            <person name="Glavina del Rio T."/>
            <person name="Dalin E."/>
            <person name="Tice H."/>
            <person name="Bruce D."/>
            <person name="Goodwin L."/>
            <person name="Pitluck S."/>
            <person name="Sims D."/>
            <person name="Kiss H."/>
            <person name="Brettin T."/>
            <person name="Detter J.C."/>
            <person name="Han C."/>
            <person name="Larimer F."/>
            <person name="Land M."/>
            <person name="Hauser L."/>
            <person name="Kyrpides N."/>
            <person name="Ovchinnikova G."/>
            <person name="Bryant D.A."/>
            <person name="Richardson P."/>
        </authorList>
    </citation>
    <scope>NUCLEOTIDE SEQUENCE [LARGE SCALE GENOMIC DNA]</scope>
    <source>
        <strain>ATCC 29364 / DSM 637 / Y-400-fl</strain>
    </source>
</reference>
<organism>
    <name type="scientific">Chloroflexus aurantiacus (strain ATCC 29364 / DSM 637 / Y-400-fl)</name>
    <dbReference type="NCBI Taxonomy" id="480224"/>
    <lineage>
        <taxon>Bacteria</taxon>
        <taxon>Bacillati</taxon>
        <taxon>Chloroflexota</taxon>
        <taxon>Chloroflexia</taxon>
        <taxon>Chloroflexales</taxon>
        <taxon>Chloroflexineae</taxon>
        <taxon>Chloroflexaceae</taxon>
        <taxon>Chloroflexus</taxon>
    </lineage>
</organism>
<gene>
    <name type="ordered locus">Chy400_3417</name>
</gene>
<proteinExistence type="inferred from homology"/>
<sequence>MPRLSEAEIAEQLAQRPDWSLENNEIVRTFRLANFPAAIAFVTHVAFLAEAAGHHPDIDIRYNRVRLALTTHDAGGLTEKDFALAAAIDEIMG</sequence>
<dbReference type="EC" id="4.2.1.96" evidence="1"/>
<dbReference type="EMBL" id="CP001364">
    <property type="protein sequence ID" value="ACM54793.1"/>
    <property type="molecule type" value="Genomic_DNA"/>
</dbReference>
<dbReference type="SMR" id="B9LCC8"/>
<dbReference type="KEGG" id="chl:Chy400_3417"/>
<dbReference type="HOGENOM" id="CLU_081974_4_0_0"/>
<dbReference type="OrthoDB" id="9800108at2"/>
<dbReference type="GO" id="GO:0008124">
    <property type="term" value="F:4-alpha-hydroxytetrahydrobiopterin dehydratase activity"/>
    <property type="evidence" value="ECO:0007669"/>
    <property type="project" value="UniProtKB-UniRule"/>
</dbReference>
<dbReference type="GO" id="GO:0006729">
    <property type="term" value="P:tetrahydrobiopterin biosynthetic process"/>
    <property type="evidence" value="ECO:0007669"/>
    <property type="project" value="InterPro"/>
</dbReference>
<dbReference type="CDD" id="cd00488">
    <property type="entry name" value="PCD_DCoH"/>
    <property type="match status" value="1"/>
</dbReference>
<dbReference type="Gene3D" id="3.30.1360.20">
    <property type="entry name" value="Transcriptional coactivator/pterin dehydratase"/>
    <property type="match status" value="1"/>
</dbReference>
<dbReference type="HAMAP" id="MF_00434">
    <property type="entry name" value="Pterin_4_alpha"/>
    <property type="match status" value="1"/>
</dbReference>
<dbReference type="InterPro" id="IPR036428">
    <property type="entry name" value="PCD_sf"/>
</dbReference>
<dbReference type="InterPro" id="IPR001533">
    <property type="entry name" value="Pterin_deHydtase"/>
</dbReference>
<dbReference type="NCBIfam" id="NF002017">
    <property type="entry name" value="PRK00823.1-2"/>
    <property type="match status" value="1"/>
</dbReference>
<dbReference type="PANTHER" id="PTHR12599">
    <property type="entry name" value="PTERIN-4-ALPHA-CARBINOLAMINE DEHYDRATASE"/>
    <property type="match status" value="1"/>
</dbReference>
<dbReference type="PANTHER" id="PTHR12599:SF0">
    <property type="entry name" value="PTERIN-4-ALPHA-CARBINOLAMINE DEHYDRATASE"/>
    <property type="match status" value="1"/>
</dbReference>
<dbReference type="Pfam" id="PF01329">
    <property type="entry name" value="Pterin_4a"/>
    <property type="match status" value="1"/>
</dbReference>
<dbReference type="SUPFAM" id="SSF55248">
    <property type="entry name" value="PCD-like"/>
    <property type="match status" value="1"/>
</dbReference>
<keyword id="KW-0456">Lyase</keyword>